<accession>Q7VE55</accession>
<proteinExistence type="inferred from homology"/>
<evidence type="ECO:0000255" key="1">
    <source>
        <dbReference type="HAMAP-Rule" id="MF_01815"/>
    </source>
</evidence>
<dbReference type="EC" id="2.3.1.180" evidence="1"/>
<dbReference type="EMBL" id="AE017126">
    <property type="protein sequence ID" value="AAP99204.1"/>
    <property type="molecule type" value="Genomic_DNA"/>
</dbReference>
<dbReference type="RefSeq" id="NP_874552.1">
    <property type="nucleotide sequence ID" value="NC_005042.1"/>
</dbReference>
<dbReference type="RefSeq" id="WP_011124313.1">
    <property type="nucleotide sequence ID" value="NC_005042.1"/>
</dbReference>
<dbReference type="SMR" id="Q7VE55"/>
<dbReference type="STRING" id="167539.Pro_0158"/>
<dbReference type="EnsemblBacteria" id="AAP99204">
    <property type="protein sequence ID" value="AAP99204"/>
    <property type="gene ID" value="Pro_0158"/>
</dbReference>
<dbReference type="KEGG" id="pma:Pro_0158"/>
<dbReference type="PATRIC" id="fig|167539.5.peg.164"/>
<dbReference type="eggNOG" id="COG0332">
    <property type="taxonomic scope" value="Bacteria"/>
</dbReference>
<dbReference type="HOGENOM" id="CLU_039592_0_1_3"/>
<dbReference type="OrthoDB" id="9815506at2"/>
<dbReference type="UniPathway" id="UPA00094"/>
<dbReference type="Proteomes" id="UP000001420">
    <property type="component" value="Chromosome"/>
</dbReference>
<dbReference type="GO" id="GO:0005737">
    <property type="term" value="C:cytoplasm"/>
    <property type="evidence" value="ECO:0007669"/>
    <property type="project" value="UniProtKB-SubCell"/>
</dbReference>
<dbReference type="GO" id="GO:0004315">
    <property type="term" value="F:3-oxoacyl-[acyl-carrier-protein] synthase activity"/>
    <property type="evidence" value="ECO:0007669"/>
    <property type="project" value="InterPro"/>
</dbReference>
<dbReference type="GO" id="GO:0033818">
    <property type="term" value="F:beta-ketoacyl-acyl-carrier-protein synthase III activity"/>
    <property type="evidence" value="ECO:0007669"/>
    <property type="project" value="UniProtKB-UniRule"/>
</dbReference>
<dbReference type="GO" id="GO:0006633">
    <property type="term" value="P:fatty acid biosynthetic process"/>
    <property type="evidence" value="ECO:0007669"/>
    <property type="project" value="UniProtKB-UniRule"/>
</dbReference>
<dbReference type="CDD" id="cd00830">
    <property type="entry name" value="KAS_III"/>
    <property type="match status" value="1"/>
</dbReference>
<dbReference type="FunFam" id="3.40.47.10:FF:000004">
    <property type="entry name" value="3-oxoacyl-[acyl-carrier-protein] synthase 3"/>
    <property type="match status" value="1"/>
</dbReference>
<dbReference type="Gene3D" id="3.40.47.10">
    <property type="match status" value="1"/>
</dbReference>
<dbReference type="HAMAP" id="MF_01815">
    <property type="entry name" value="FabH"/>
    <property type="match status" value="1"/>
</dbReference>
<dbReference type="InterPro" id="IPR013747">
    <property type="entry name" value="ACP_syn_III_C"/>
</dbReference>
<dbReference type="InterPro" id="IPR013751">
    <property type="entry name" value="ACP_syn_III_N"/>
</dbReference>
<dbReference type="InterPro" id="IPR004655">
    <property type="entry name" value="FabH"/>
</dbReference>
<dbReference type="InterPro" id="IPR016039">
    <property type="entry name" value="Thiolase-like"/>
</dbReference>
<dbReference type="NCBIfam" id="TIGR00747">
    <property type="entry name" value="fabH"/>
    <property type="match status" value="1"/>
</dbReference>
<dbReference type="NCBIfam" id="NF006829">
    <property type="entry name" value="PRK09352.1"/>
    <property type="match status" value="1"/>
</dbReference>
<dbReference type="PANTHER" id="PTHR43091">
    <property type="entry name" value="3-OXOACYL-[ACYL-CARRIER-PROTEIN] SYNTHASE"/>
    <property type="match status" value="1"/>
</dbReference>
<dbReference type="PANTHER" id="PTHR43091:SF1">
    <property type="entry name" value="BETA-KETOACYL-[ACYL-CARRIER-PROTEIN] SYNTHASE III, CHLOROPLASTIC"/>
    <property type="match status" value="1"/>
</dbReference>
<dbReference type="Pfam" id="PF08545">
    <property type="entry name" value="ACP_syn_III"/>
    <property type="match status" value="1"/>
</dbReference>
<dbReference type="Pfam" id="PF08541">
    <property type="entry name" value="ACP_syn_III_C"/>
    <property type="match status" value="1"/>
</dbReference>
<dbReference type="SUPFAM" id="SSF53901">
    <property type="entry name" value="Thiolase-like"/>
    <property type="match status" value="1"/>
</dbReference>
<name>FABH_PROMA</name>
<protein>
    <recommendedName>
        <fullName evidence="1">Beta-ketoacyl-[acyl-carrier-protein] synthase III</fullName>
        <shortName evidence="1">Beta-ketoacyl-ACP synthase III</shortName>
        <shortName evidence="1">KAS III</shortName>
        <ecNumber evidence="1">2.3.1.180</ecNumber>
    </recommendedName>
    <alternativeName>
        <fullName evidence="1">3-oxoacyl-[acyl-carrier-protein] synthase 3</fullName>
    </alternativeName>
    <alternativeName>
        <fullName evidence="1">3-oxoacyl-[acyl-carrier-protein] synthase III</fullName>
    </alternativeName>
</protein>
<sequence length="338" mass="36164">MTGNSSNGYGVSLVGSGSATPSQIVSNDQLALRVDTNDEWVKTRTGIRERRIIGADESLTDLCVAAAKAAVDMAGWGVESIEMVLIATSTPDDLFGMAPKVQSKLGATRAVAFDLTAACSGFLFGLVSAAQFLQNGSFKRAVVIGADQLSGWVDWDDRSSCVLFGDGAGAIAIEATAEEDDLIGFKMKSDGSRGDCLNLAQKRNFVPLVESYQTQKGDFSPIKMNGQEVYKFAVREVPSLLKDVLQTYGIVPESLDWLLLHQANQRILNAVADRFSIPHHKVLTNLANYGNTSAATIPIMLDEAVRDGKVQSGHLIASSGFGAGLSWGVALFRWHGPF</sequence>
<keyword id="KW-0012">Acyltransferase</keyword>
<keyword id="KW-0963">Cytoplasm</keyword>
<keyword id="KW-0275">Fatty acid biosynthesis</keyword>
<keyword id="KW-0276">Fatty acid metabolism</keyword>
<keyword id="KW-0444">Lipid biosynthesis</keyword>
<keyword id="KW-0443">Lipid metabolism</keyword>
<keyword id="KW-0511">Multifunctional enzyme</keyword>
<keyword id="KW-1185">Reference proteome</keyword>
<keyword id="KW-0808">Transferase</keyword>
<comment type="function">
    <text evidence="1">Catalyzes the condensation reaction of fatty acid synthesis by the addition to an acyl acceptor of two carbons from malonyl-ACP. Catalyzes the first condensation reaction which initiates fatty acid synthesis and may therefore play a role in governing the total rate of fatty acid production. Possesses both acetoacetyl-ACP synthase and acetyl transacylase activities. Its substrate specificity determines the biosynthesis of branched-chain and/or straight-chain of fatty acids.</text>
</comment>
<comment type="catalytic activity">
    <reaction evidence="1">
        <text>malonyl-[ACP] + acetyl-CoA + H(+) = 3-oxobutanoyl-[ACP] + CO2 + CoA</text>
        <dbReference type="Rhea" id="RHEA:12080"/>
        <dbReference type="Rhea" id="RHEA-COMP:9623"/>
        <dbReference type="Rhea" id="RHEA-COMP:9625"/>
        <dbReference type="ChEBI" id="CHEBI:15378"/>
        <dbReference type="ChEBI" id="CHEBI:16526"/>
        <dbReference type="ChEBI" id="CHEBI:57287"/>
        <dbReference type="ChEBI" id="CHEBI:57288"/>
        <dbReference type="ChEBI" id="CHEBI:78449"/>
        <dbReference type="ChEBI" id="CHEBI:78450"/>
        <dbReference type="EC" id="2.3.1.180"/>
    </reaction>
</comment>
<comment type="pathway">
    <text evidence="1">Lipid metabolism; fatty acid biosynthesis.</text>
</comment>
<comment type="subunit">
    <text evidence="1">Homodimer.</text>
</comment>
<comment type="subcellular location">
    <subcellularLocation>
        <location evidence="1">Cytoplasm</location>
    </subcellularLocation>
</comment>
<comment type="domain">
    <text evidence="1">The last Arg residue of the ACP-binding site is essential for the weak association between ACP/AcpP and FabH.</text>
</comment>
<comment type="similarity">
    <text evidence="1">Belongs to the thiolase-like superfamily. FabH family.</text>
</comment>
<reference key="1">
    <citation type="journal article" date="2003" name="Proc. Natl. Acad. Sci. U.S.A.">
        <title>Genome sequence of the cyanobacterium Prochlorococcus marinus SS120, a nearly minimal oxyphototrophic genome.</title>
        <authorList>
            <person name="Dufresne A."/>
            <person name="Salanoubat M."/>
            <person name="Partensky F."/>
            <person name="Artiguenave F."/>
            <person name="Axmann I.M."/>
            <person name="Barbe V."/>
            <person name="Duprat S."/>
            <person name="Galperin M.Y."/>
            <person name="Koonin E.V."/>
            <person name="Le Gall F."/>
            <person name="Makarova K.S."/>
            <person name="Ostrowski M."/>
            <person name="Oztas S."/>
            <person name="Robert C."/>
            <person name="Rogozin I.B."/>
            <person name="Scanlan D.J."/>
            <person name="Tandeau de Marsac N."/>
            <person name="Weissenbach J."/>
            <person name="Wincker P."/>
            <person name="Wolf Y.I."/>
            <person name="Hess W.R."/>
        </authorList>
    </citation>
    <scope>NUCLEOTIDE SEQUENCE [LARGE SCALE GENOMIC DNA]</scope>
    <source>
        <strain>SARG / CCMP1375 / SS120</strain>
    </source>
</reference>
<gene>
    <name evidence="1" type="primary">fabH</name>
    <name type="ordered locus">Pro_0158</name>
</gene>
<feature type="chain" id="PRO_0000110452" description="Beta-ketoacyl-[acyl-carrier-protein] synthase III">
    <location>
        <begin position="1"/>
        <end position="338"/>
    </location>
</feature>
<feature type="region of interest" description="ACP-binding" evidence="1">
    <location>
        <begin position="262"/>
        <end position="266"/>
    </location>
</feature>
<feature type="active site" evidence="1">
    <location>
        <position position="119"/>
    </location>
</feature>
<feature type="active site" evidence="1">
    <location>
        <position position="261"/>
    </location>
</feature>
<feature type="active site" evidence="1">
    <location>
        <position position="291"/>
    </location>
</feature>
<organism>
    <name type="scientific">Prochlorococcus marinus (strain SARG / CCMP1375 / SS120)</name>
    <dbReference type="NCBI Taxonomy" id="167539"/>
    <lineage>
        <taxon>Bacteria</taxon>
        <taxon>Bacillati</taxon>
        <taxon>Cyanobacteriota</taxon>
        <taxon>Cyanophyceae</taxon>
        <taxon>Synechococcales</taxon>
        <taxon>Prochlorococcaceae</taxon>
        <taxon>Prochlorococcus</taxon>
    </lineage>
</organism>